<accession>Q9PIR0</accession>
<accession>Q0PBS0</accession>
<evidence type="ECO:0000255" key="1">
    <source>
        <dbReference type="HAMAP-Rule" id="MF_00040"/>
    </source>
</evidence>
<evidence type="ECO:0000305" key="2"/>
<feature type="chain" id="PRO_0000167433" description="Ribosome-recycling factor">
    <location>
        <begin position="1"/>
        <end position="185"/>
    </location>
</feature>
<sequence length="185" mass="20710">MLNEIFNKQKTQSEKSLEALKKDFTTLRTGKVNIHILDHITVDYYGTQTPLNQVATVLASDASTISITPWEKPLLKTIESAIAAANIGVNPNNDGESVKLFFPPMTREQREENVKQAKAMGEKAKVSIRNIRKDANDAVKKLEKDKAISEDEAKKAYDEVQKLTDTYTTKIDEGVKSKESELLKV</sequence>
<organism>
    <name type="scientific">Campylobacter jejuni subsp. jejuni serotype O:2 (strain ATCC 700819 / NCTC 11168)</name>
    <dbReference type="NCBI Taxonomy" id="192222"/>
    <lineage>
        <taxon>Bacteria</taxon>
        <taxon>Pseudomonadati</taxon>
        <taxon>Campylobacterota</taxon>
        <taxon>Epsilonproteobacteria</taxon>
        <taxon>Campylobacterales</taxon>
        <taxon>Campylobacteraceae</taxon>
        <taxon>Campylobacter</taxon>
    </lineage>
</organism>
<proteinExistence type="inferred from homology"/>
<reference key="1">
    <citation type="journal article" date="2000" name="Nature">
        <title>The genome sequence of the food-borne pathogen Campylobacter jejuni reveals hypervariable sequences.</title>
        <authorList>
            <person name="Parkhill J."/>
            <person name="Wren B.W."/>
            <person name="Mungall K.L."/>
            <person name="Ketley J.M."/>
            <person name="Churcher C.M."/>
            <person name="Basham D."/>
            <person name="Chillingworth T."/>
            <person name="Davies R.M."/>
            <person name="Feltwell T."/>
            <person name="Holroyd S."/>
            <person name="Jagels K."/>
            <person name="Karlyshev A.V."/>
            <person name="Moule S."/>
            <person name="Pallen M.J."/>
            <person name="Penn C.W."/>
            <person name="Quail M.A."/>
            <person name="Rajandream M.A."/>
            <person name="Rutherford K.M."/>
            <person name="van Vliet A.H.M."/>
            <person name="Whitehead S."/>
            <person name="Barrell B.G."/>
        </authorList>
    </citation>
    <scope>NUCLEOTIDE SEQUENCE [LARGE SCALE GENOMIC DNA]</scope>
    <source>
        <strain>ATCC 700819 / NCTC 11168</strain>
    </source>
</reference>
<gene>
    <name evidence="1" type="primary">frr</name>
    <name type="ordered locus">Cj0234c</name>
</gene>
<dbReference type="EMBL" id="AL111168">
    <property type="protein sequence ID" value="CAL34389.1"/>
    <property type="status" value="ALT_INIT"/>
    <property type="molecule type" value="Genomic_DNA"/>
</dbReference>
<dbReference type="PIR" id="B81441">
    <property type="entry name" value="B81441"/>
</dbReference>
<dbReference type="RefSeq" id="YP_002343677.1">
    <property type="nucleotide sequence ID" value="NC_002163.1"/>
</dbReference>
<dbReference type="SMR" id="Q9PIR0"/>
<dbReference type="IntAct" id="Q9PIR0">
    <property type="interactions" value="7"/>
</dbReference>
<dbReference type="STRING" id="192222.Cj0234c"/>
<dbReference type="PaxDb" id="192222-Cj0234c"/>
<dbReference type="EnsemblBacteria" id="CAL34389">
    <property type="protein sequence ID" value="CAL34389"/>
    <property type="gene ID" value="Cj0234c"/>
</dbReference>
<dbReference type="GeneID" id="904561"/>
<dbReference type="KEGG" id="cje:Cj0234c"/>
<dbReference type="PATRIC" id="fig|192222.6.peg.228"/>
<dbReference type="eggNOG" id="COG0233">
    <property type="taxonomic scope" value="Bacteria"/>
</dbReference>
<dbReference type="HOGENOM" id="CLU_073981_2_0_7"/>
<dbReference type="OrthoDB" id="9804006at2"/>
<dbReference type="Proteomes" id="UP000000799">
    <property type="component" value="Chromosome"/>
</dbReference>
<dbReference type="GO" id="GO:0005829">
    <property type="term" value="C:cytosol"/>
    <property type="evidence" value="ECO:0007669"/>
    <property type="project" value="GOC"/>
</dbReference>
<dbReference type="GO" id="GO:0043023">
    <property type="term" value="F:ribosomal large subunit binding"/>
    <property type="evidence" value="ECO:0007669"/>
    <property type="project" value="TreeGrafter"/>
</dbReference>
<dbReference type="GO" id="GO:0002184">
    <property type="term" value="P:cytoplasmic translational termination"/>
    <property type="evidence" value="ECO:0007669"/>
    <property type="project" value="TreeGrafter"/>
</dbReference>
<dbReference type="CDD" id="cd00520">
    <property type="entry name" value="RRF"/>
    <property type="match status" value="1"/>
</dbReference>
<dbReference type="FunFam" id="1.10.132.20:FF:000001">
    <property type="entry name" value="Ribosome-recycling factor"/>
    <property type="match status" value="1"/>
</dbReference>
<dbReference type="FunFam" id="3.30.1360.40:FF:000001">
    <property type="entry name" value="Ribosome-recycling factor"/>
    <property type="match status" value="1"/>
</dbReference>
<dbReference type="Gene3D" id="3.30.1360.40">
    <property type="match status" value="1"/>
</dbReference>
<dbReference type="Gene3D" id="1.10.132.20">
    <property type="entry name" value="Ribosome-recycling factor"/>
    <property type="match status" value="1"/>
</dbReference>
<dbReference type="HAMAP" id="MF_00040">
    <property type="entry name" value="RRF"/>
    <property type="match status" value="1"/>
</dbReference>
<dbReference type="InterPro" id="IPR002661">
    <property type="entry name" value="Ribosome_recyc_fac"/>
</dbReference>
<dbReference type="InterPro" id="IPR023584">
    <property type="entry name" value="Ribosome_recyc_fac_dom"/>
</dbReference>
<dbReference type="InterPro" id="IPR036191">
    <property type="entry name" value="RRF_sf"/>
</dbReference>
<dbReference type="NCBIfam" id="TIGR00496">
    <property type="entry name" value="frr"/>
    <property type="match status" value="1"/>
</dbReference>
<dbReference type="PANTHER" id="PTHR20982:SF3">
    <property type="entry name" value="MITOCHONDRIAL RIBOSOME RECYCLING FACTOR PSEUDO 1"/>
    <property type="match status" value="1"/>
</dbReference>
<dbReference type="PANTHER" id="PTHR20982">
    <property type="entry name" value="RIBOSOME RECYCLING FACTOR"/>
    <property type="match status" value="1"/>
</dbReference>
<dbReference type="Pfam" id="PF01765">
    <property type="entry name" value="RRF"/>
    <property type="match status" value="1"/>
</dbReference>
<dbReference type="SUPFAM" id="SSF55194">
    <property type="entry name" value="Ribosome recycling factor, RRF"/>
    <property type="match status" value="1"/>
</dbReference>
<protein>
    <recommendedName>
        <fullName evidence="1">Ribosome-recycling factor</fullName>
        <shortName evidence="1">RRF</shortName>
    </recommendedName>
    <alternativeName>
        <fullName evidence="1">Ribosome-releasing factor</fullName>
    </alternativeName>
</protein>
<keyword id="KW-0963">Cytoplasm</keyword>
<keyword id="KW-0648">Protein biosynthesis</keyword>
<keyword id="KW-1185">Reference proteome</keyword>
<name>RRF_CAMJE</name>
<comment type="function">
    <text evidence="1">Responsible for the release of ribosomes from messenger RNA at the termination of protein biosynthesis. May increase the efficiency of translation by recycling ribosomes from one round of translation to another.</text>
</comment>
<comment type="subcellular location">
    <subcellularLocation>
        <location evidence="1">Cytoplasm</location>
    </subcellularLocation>
</comment>
<comment type="similarity">
    <text evidence="1">Belongs to the RRF family.</text>
</comment>
<comment type="sequence caution" evidence="2">
    <conflict type="erroneous initiation">
        <sequence resource="EMBL-CDS" id="CAL34389"/>
    </conflict>
</comment>